<feature type="chain" id="PRO_0000295810" description="LIM/homeobox protein Lhx8">
    <location>
        <begin position="1"/>
        <end position="356"/>
    </location>
</feature>
<feature type="domain" description="LIM zinc-binding 1" evidence="3">
    <location>
        <begin position="73"/>
        <end position="133"/>
    </location>
</feature>
<feature type="domain" description="LIM zinc-binding 2" evidence="3">
    <location>
        <begin position="134"/>
        <end position="196"/>
    </location>
</feature>
<feature type="DNA-binding region" description="Homeobox" evidence="2">
    <location>
        <begin position="225"/>
        <end position="284"/>
    </location>
</feature>
<feature type="region of interest" description="Disordered" evidence="4">
    <location>
        <begin position="23"/>
        <end position="63"/>
    </location>
</feature>
<feature type="compositionally biased region" description="Low complexity" evidence="4">
    <location>
        <begin position="47"/>
        <end position="63"/>
    </location>
</feature>
<feature type="splice variant" id="VSP_047378" description="In isoform 2." evidence="5">
    <location>
        <begin position="1"/>
        <end position="10"/>
    </location>
</feature>
<feature type="sequence conflict" description="In Ref. 2; AAH40321." evidence="5" ref="2">
    <original>V</original>
    <variation>A</variation>
    <location>
        <position position="297"/>
    </location>
</feature>
<proteinExistence type="evidence at protein level"/>
<protein>
    <recommendedName>
        <fullName>LIM/homeobox protein Lhx8</fullName>
        <shortName>LIM homeobox protein 8</shortName>
    </recommendedName>
</protein>
<evidence type="ECO:0000250" key="1"/>
<evidence type="ECO:0000255" key="2">
    <source>
        <dbReference type="PROSITE-ProRule" id="PRU00108"/>
    </source>
</evidence>
<evidence type="ECO:0000255" key="3">
    <source>
        <dbReference type="PROSITE-ProRule" id="PRU00125"/>
    </source>
</evidence>
<evidence type="ECO:0000256" key="4">
    <source>
        <dbReference type="SAM" id="MobiDB-lite"/>
    </source>
</evidence>
<evidence type="ECO:0000305" key="5"/>
<sequence>MQILSRCQGLMSEECGRTTALAAGRTRKGAGEEGLVSPEGAGDEDSCSSSAPLSPSSSPRSMASGSGCPPGKCVCNSCGLEIVDKYLLKVNDLCWHVRCLSCSVCRTSLGRHTSCYIKDKDIFCKLDYFRRYGTRCSRCGRHIHSTDWVRRAKGNVYHLACFACFSCKRQLSTGEEFALVEEKVLCRVHYDCMLDNLKREVENGNGISVEGALLTEQDVNHPKPAKRARTSFTADQLQVMQAQFAQDNNPDAQTLQKLAERTGLSRRVIQVWFQNCRARHKKHVSPNHSSSTPVTAVPPSRLSPPMLEEMAYSAYVPQDGTMLTALHSYMDAHSPTTLGLQPLLPHSMTQLPISHT</sequence>
<comment type="function">
    <text evidence="1">Transcription factor involved in differentiation of certain neurons and mesenchymal cells.</text>
</comment>
<comment type="interaction">
    <interactant intactId="EBI-8474075">
        <id>Q68G74</id>
    </interactant>
    <interactant intactId="EBI-11096309">
        <id>Q9NYB9-2</id>
        <label>ABI2</label>
    </interactant>
    <organismsDiffer>false</organismsDiffer>
    <experiments>3</experiments>
</comment>
<comment type="interaction">
    <interactant intactId="EBI-8474075">
        <id>Q68G74</id>
    </interactant>
    <interactant intactId="EBI-1170906">
        <id>P15336</id>
        <label>ATF2</label>
    </interactant>
    <organismsDiffer>false</organismsDiffer>
    <experiments>3</experiments>
</comment>
<comment type="interaction">
    <interactant intactId="EBI-8474075">
        <id>Q68G74</id>
    </interactant>
    <interactant intactId="EBI-12015400">
        <id>Q96QL7</id>
        <label>ATF6B</label>
    </interactant>
    <organismsDiffer>false</organismsDiffer>
    <experiments>3</experiments>
</comment>
<comment type="interaction">
    <interactant intactId="EBI-8474075">
        <id>Q68G74</id>
    </interactant>
    <interactant intactId="EBI-16429430">
        <id>A0A0S2Z4M1</id>
        <label>AXIN1</label>
    </interactant>
    <organismsDiffer>false</organismsDiffer>
    <experiments>3</experiments>
</comment>
<comment type="interaction">
    <interactant intactId="EBI-8474075">
        <id>Q68G74</id>
    </interactant>
    <interactant intactId="EBI-11524452">
        <id>Q8N9N5-2</id>
        <label>BANP</label>
    </interactant>
    <organismsDiffer>false</organismsDiffer>
    <experiments>3</experiments>
</comment>
<comment type="interaction">
    <interactant intactId="EBI-8474075">
        <id>Q68G74</id>
    </interactant>
    <interactant intactId="EBI-10175300">
        <id>Q8TD31-3</id>
        <label>CCHCR1</label>
    </interactant>
    <organismsDiffer>false</organismsDiffer>
    <experiments>3</experiments>
</comment>
<comment type="interaction">
    <interactant intactId="EBI-8474075">
        <id>Q68G74</id>
    </interactant>
    <interactant intactId="EBI-355710">
        <id>P48643</id>
        <label>CCT5</label>
    </interactant>
    <organismsDiffer>false</organismsDiffer>
    <experiments>3</experiments>
</comment>
<comment type="interaction">
    <interactant intactId="EBI-8474075">
        <id>Q68G74</id>
    </interactant>
    <interactant intactId="EBI-347804">
        <id>P68400</id>
        <label>CSNK2A1</label>
    </interactant>
    <organismsDiffer>false</organismsDiffer>
    <experiments>3</experiments>
</comment>
<comment type="interaction">
    <interactant intactId="EBI-8474075">
        <id>Q68G74</id>
    </interactant>
    <interactant intactId="EBI-10976677">
        <id>G5E9A7</id>
        <label>DMWD</label>
    </interactant>
    <organismsDiffer>false</organismsDiffer>
    <experiments>3</experiments>
</comment>
<comment type="interaction">
    <interactant intactId="EBI-8474075">
        <id>Q68G74</id>
    </interactant>
    <interactant intactId="EBI-11525448">
        <id>O43281-2</id>
        <label>EFS</label>
    </interactant>
    <organismsDiffer>false</organismsDiffer>
    <experiments>3</experiments>
</comment>
<comment type="interaction">
    <interactant intactId="EBI-8474075">
        <id>Q68G74</id>
    </interactant>
    <interactant intactId="EBI-348399">
        <id>P22607</id>
        <label>FGFR3</label>
    </interactant>
    <organismsDiffer>false</organismsDiffer>
    <experiments>3</experiments>
</comment>
<comment type="interaction">
    <interactant intactId="EBI-8474075">
        <id>Q68G74</id>
    </interactant>
    <interactant intactId="EBI-11976617">
        <id>Q6QHK4</id>
        <label>FIGLA</label>
    </interactant>
    <organismsDiffer>false</organismsDiffer>
    <experiments>9</experiments>
</comment>
<comment type="interaction">
    <interactant intactId="EBI-8474075">
        <id>Q68G74</id>
    </interactant>
    <interactant intactId="EBI-3893419">
        <id>P15408</id>
        <label>FOSL2</label>
    </interactant>
    <organismsDiffer>false</organismsDiffer>
    <experiments>3</experiments>
</comment>
<comment type="interaction">
    <interactant intactId="EBI-8474075">
        <id>Q68G74</id>
    </interactant>
    <interactant intactId="EBI-11319000">
        <id>O15353</id>
        <label>FOXN1</label>
    </interactant>
    <organismsDiffer>false</organismsDiffer>
    <experiments>3</experiments>
</comment>
<comment type="interaction">
    <interactant intactId="EBI-8474075">
        <id>Q68G74</id>
    </interactant>
    <interactant intactId="EBI-747500">
        <id>Q9BRT9</id>
        <label>GINS4</label>
    </interactant>
    <organismsDiffer>false</organismsDiffer>
    <experiments>3</experiments>
</comment>
<comment type="interaction">
    <interactant intactId="EBI-8474075">
        <id>Q68G74</id>
    </interactant>
    <interactant intactId="EBI-1955541">
        <id>Q53GS7</id>
        <label>GLE1</label>
    </interactant>
    <organismsDiffer>false</organismsDiffer>
    <experiments>3</experiments>
</comment>
<comment type="interaction">
    <interactant intactId="EBI-8474075">
        <id>Q68G74</id>
    </interactant>
    <interactant intactId="EBI-8285963">
        <id>Q14957</id>
        <label>GRIN2C</label>
    </interactant>
    <organismsDiffer>false</organismsDiffer>
    <experiments>3</experiments>
</comment>
<comment type="interaction">
    <interactant intactId="EBI-8474075">
        <id>Q68G74</id>
    </interactant>
    <interactant intactId="EBI-747754">
        <id>P28799</id>
        <label>GRN</label>
    </interactant>
    <organismsDiffer>false</organismsDiffer>
    <experiments>3</experiments>
</comment>
<comment type="interaction">
    <interactant intactId="EBI-8474075">
        <id>Q68G74</id>
    </interactant>
    <interactant intactId="EBI-466029">
        <id>P42858</id>
        <label>HTT</label>
    </interactant>
    <organismsDiffer>false</organismsDiffer>
    <experiments>12</experiments>
</comment>
<comment type="interaction">
    <interactant intactId="EBI-8474075">
        <id>Q68G74</id>
    </interactant>
    <interactant intactId="EBI-10975473">
        <id>O60333-2</id>
        <label>KIF1B</label>
    </interactant>
    <organismsDiffer>false</organismsDiffer>
    <experiments>3</experiments>
</comment>
<comment type="interaction">
    <interactant intactId="EBI-8474075">
        <id>Q68G74</id>
    </interactant>
    <interactant intactId="EBI-8472267">
        <id>P57682</id>
        <label>KLF3</label>
    </interactant>
    <organismsDiffer>false</organismsDiffer>
    <experiments>3</experiments>
</comment>
<comment type="interaction">
    <interactant intactId="EBI-8474075">
        <id>Q68G74</id>
    </interactant>
    <interactant intactId="EBI-1049371">
        <id>P78386</id>
        <label>KRT85</label>
    </interactant>
    <organismsDiffer>false</organismsDiffer>
    <experiments>3</experiments>
</comment>
<comment type="interaction">
    <interactant intactId="EBI-8474075">
        <id>Q68G74</id>
    </interactant>
    <interactant intactId="EBI-677177">
        <id>Q86U70</id>
        <label>LDB1</label>
    </interactant>
    <organismsDiffer>false</organismsDiffer>
    <experiments>5</experiments>
</comment>
<comment type="interaction">
    <interactant intactId="EBI-8474075">
        <id>Q68G74</id>
    </interactant>
    <interactant intactId="EBI-11979761">
        <id>Q86U70-2</id>
        <label>LDB1</label>
    </interactant>
    <organismsDiffer>false</organismsDiffer>
    <experiments>6</experiments>
</comment>
<comment type="interaction">
    <interactant intactId="EBI-8474075">
        <id>Q68G74</id>
    </interactant>
    <interactant intactId="EBI-2865580">
        <id>O43679</id>
        <label>LDB2</label>
    </interactant>
    <organismsDiffer>false</organismsDiffer>
    <experiments>5</experiments>
</comment>
<comment type="interaction">
    <interactant intactId="EBI-8474075">
        <id>Q68G74</id>
    </interactant>
    <interactant intactId="EBI-11746523">
        <id>Q14511-2</id>
        <label>NEDD9</label>
    </interactant>
    <organismsDiffer>false</organismsDiffer>
    <experiments>3</experiments>
</comment>
<comment type="interaction">
    <interactant intactId="EBI-8474075">
        <id>Q68G74</id>
    </interactant>
    <interactant intactId="EBI-10178410">
        <id>Q86Y26</id>
        <label>NUTM1</label>
    </interactant>
    <organismsDiffer>false</organismsDiffer>
    <experiments>3</experiments>
</comment>
<comment type="interaction">
    <interactant intactId="EBI-8474075">
        <id>Q68G74</id>
    </interactant>
    <interactant intactId="EBI-988601">
        <id>O43933</id>
        <label>PEX1</label>
    </interactant>
    <organismsDiffer>false</organismsDiffer>
    <experiments>3</experiments>
</comment>
<comment type="interaction">
    <interactant intactId="EBI-8474075">
        <id>Q68G74</id>
    </interactant>
    <interactant intactId="EBI-1567797">
        <id>Q8WWY3</id>
        <label>PRPF31</label>
    </interactant>
    <organismsDiffer>false</organismsDiffer>
    <experiments>3</experiments>
</comment>
<comment type="interaction">
    <interactant intactId="EBI-8474075">
        <id>Q68G74</id>
    </interactant>
    <interactant intactId="EBI-396669">
        <id>Q9Y3C5</id>
        <label>RNF11</label>
    </interactant>
    <organismsDiffer>false</organismsDiffer>
    <experiments>3</experiments>
</comment>
<comment type="interaction">
    <interactant intactId="EBI-8474075">
        <id>Q68G74</id>
    </interactant>
    <interactant intactId="EBI-1380680">
        <id>Q8IZE3</id>
        <label>SCYL3</label>
    </interactant>
    <organismsDiffer>false</organismsDiffer>
    <experiments>3</experiments>
</comment>
<comment type="interaction">
    <interactant intactId="EBI-8474075">
        <id>Q68G74</id>
    </interactant>
    <interactant intactId="EBI-22345187">
        <id>A0A0B4J2F2</id>
        <label>SIK1B</label>
    </interactant>
    <organismsDiffer>false</organismsDiffer>
    <experiments>3</experiments>
</comment>
<comment type="interaction">
    <interactant intactId="EBI-8474075">
        <id>Q68G74</id>
    </interactant>
    <interactant intactId="EBI-5235340">
        <id>Q7Z699</id>
        <label>SPRED1</label>
    </interactant>
    <organismsDiffer>false</organismsDiffer>
    <experiments>3</experiments>
</comment>
<comment type="interaction">
    <interactant intactId="EBI-8474075">
        <id>Q68G74</id>
    </interactant>
    <interactant intactId="EBI-1644036">
        <id>Q86TI0</id>
        <label>TBC1D1</label>
    </interactant>
    <organismsDiffer>false</organismsDiffer>
    <experiments>3</experiments>
</comment>
<comment type="interaction">
    <interactant intactId="EBI-8474075">
        <id>Q68G74</id>
    </interactant>
    <interactant intactId="EBI-8787464">
        <id>Q9NU19</id>
        <label>TBC1D22B</label>
    </interactant>
    <organismsDiffer>false</organismsDiffer>
    <experiments>3</experiments>
</comment>
<comment type="interaction">
    <interactant intactId="EBI-8474075">
        <id>Q68G74</id>
    </interactant>
    <interactant intactId="EBI-12806590">
        <id>Q86WV8</id>
        <label>TSC1</label>
    </interactant>
    <organismsDiffer>false</organismsDiffer>
    <experiments>3</experiments>
</comment>
<comment type="interaction">
    <interactant intactId="EBI-8474075">
        <id>Q68G74</id>
    </interactant>
    <interactant intactId="EBI-741480">
        <id>Q9UMX0</id>
        <label>UBQLN1</label>
    </interactant>
    <organismsDiffer>false</organismsDiffer>
    <experiments>3</experiments>
</comment>
<comment type="interaction">
    <interactant intactId="EBI-8474075">
        <id>Q68G74</id>
    </interactant>
    <interactant intactId="EBI-720609">
        <id>O76024</id>
        <label>WFS1</label>
    </interactant>
    <organismsDiffer>false</organismsDiffer>
    <experiments>3</experiments>
</comment>
<comment type="interaction">
    <interactant intactId="EBI-8474075">
        <id>Q68G74</id>
    </interactant>
    <interactant intactId="EBI-744471">
        <id>O43167</id>
        <label>ZBTB24</label>
    </interactant>
    <organismsDiffer>false</organismsDiffer>
    <experiments>3</experiments>
</comment>
<comment type="subcellular location">
    <subcellularLocation>
        <location evidence="5">Nucleus</location>
    </subcellularLocation>
</comment>
<comment type="alternative products">
    <event type="alternative splicing"/>
    <isoform>
        <id>Q68G74-1</id>
        <name>1</name>
        <sequence type="displayed"/>
    </isoform>
    <isoform>
        <id>Q68G74-2</id>
        <name>2</name>
        <sequence type="described" ref="VSP_047378"/>
    </isoform>
</comment>
<reference key="1">
    <citation type="journal article" date="2006" name="Nature">
        <title>The DNA sequence and biological annotation of human chromosome 1.</title>
        <authorList>
            <person name="Gregory S.G."/>
            <person name="Barlow K.F."/>
            <person name="McLay K.E."/>
            <person name="Kaul R."/>
            <person name="Swarbreck D."/>
            <person name="Dunham A."/>
            <person name="Scott C.E."/>
            <person name="Howe K.L."/>
            <person name="Woodfine K."/>
            <person name="Spencer C.C.A."/>
            <person name="Jones M.C."/>
            <person name="Gillson C."/>
            <person name="Searle S."/>
            <person name="Zhou Y."/>
            <person name="Kokocinski F."/>
            <person name="McDonald L."/>
            <person name="Evans R."/>
            <person name="Phillips K."/>
            <person name="Atkinson A."/>
            <person name="Cooper R."/>
            <person name="Jones C."/>
            <person name="Hall R.E."/>
            <person name="Andrews T.D."/>
            <person name="Lloyd C."/>
            <person name="Ainscough R."/>
            <person name="Almeida J.P."/>
            <person name="Ambrose K.D."/>
            <person name="Anderson F."/>
            <person name="Andrew R.W."/>
            <person name="Ashwell R.I.S."/>
            <person name="Aubin K."/>
            <person name="Babbage A.K."/>
            <person name="Bagguley C.L."/>
            <person name="Bailey J."/>
            <person name="Beasley H."/>
            <person name="Bethel G."/>
            <person name="Bird C.P."/>
            <person name="Bray-Allen S."/>
            <person name="Brown J.Y."/>
            <person name="Brown A.J."/>
            <person name="Buckley D."/>
            <person name="Burton J."/>
            <person name="Bye J."/>
            <person name="Carder C."/>
            <person name="Chapman J.C."/>
            <person name="Clark S.Y."/>
            <person name="Clarke G."/>
            <person name="Clee C."/>
            <person name="Cobley V."/>
            <person name="Collier R.E."/>
            <person name="Corby N."/>
            <person name="Coville G.J."/>
            <person name="Davies J."/>
            <person name="Deadman R."/>
            <person name="Dunn M."/>
            <person name="Earthrowl M."/>
            <person name="Ellington A.G."/>
            <person name="Errington H."/>
            <person name="Frankish A."/>
            <person name="Frankland J."/>
            <person name="French L."/>
            <person name="Garner P."/>
            <person name="Garnett J."/>
            <person name="Gay L."/>
            <person name="Ghori M.R.J."/>
            <person name="Gibson R."/>
            <person name="Gilby L.M."/>
            <person name="Gillett W."/>
            <person name="Glithero R.J."/>
            <person name="Grafham D.V."/>
            <person name="Griffiths C."/>
            <person name="Griffiths-Jones S."/>
            <person name="Grocock R."/>
            <person name="Hammond S."/>
            <person name="Harrison E.S.I."/>
            <person name="Hart E."/>
            <person name="Haugen E."/>
            <person name="Heath P.D."/>
            <person name="Holmes S."/>
            <person name="Holt K."/>
            <person name="Howden P.J."/>
            <person name="Hunt A.R."/>
            <person name="Hunt S.E."/>
            <person name="Hunter G."/>
            <person name="Isherwood J."/>
            <person name="James R."/>
            <person name="Johnson C."/>
            <person name="Johnson D."/>
            <person name="Joy A."/>
            <person name="Kay M."/>
            <person name="Kershaw J.K."/>
            <person name="Kibukawa M."/>
            <person name="Kimberley A.M."/>
            <person name="King A."/>
            <person name="Knights A.J."/>
            <person name="Lad H."/>
            <person name="Laird G."/>
            <person name="Lawlor S."/>
            <person name="Leongamornlert D.A."/>
            <person name="Lloyd D.M."/>
            <person name="Loveland J."/>
            <person name="Lovell J."/>
            <person name="Lush M.J."/>
            <person name="Lyne R."/>
            <person name="Martin S."/>
            <person name="Mashreghi-Mohammadi M."/>
            <person name="Matthews L."/>
            <person name="Matthews N.S.W."/>
            <person name="McLaren S."/>
            <person name="Milne S."/>
            <person name="Mistry S."/>
            <person name="Moore M.J.F."/>
            <person name="Nickerson T."/>
            <person name="O'Dell C.N."/>
            <person name="Oliver K."/>
            <person name="Palmeiri A."/>
            <person name="Palmer S.A."/>
            <person name="Parker A."/>
            <person name="Patel D."/>
            <person name="Pearce A.V."/>
            <person name="Peck A.I."/>
            <person name="Pelan S."/>
            <person name="Phelps K."/>
            <person name="Phillimore B.J."/>
            <person name="Plumb R."/>
            <person name="Rajan J."/>
            <person name="Raymond C."/>
            <person name="Rouse G."/>
            <person name="Saenphimmachak C."/>
            <person name="Sehra H.K."/>
            <person name="Sheridan E."/>
            <person name="Shownkeen R."/>
            <person name="Sims S."/>
            <person name="Skuce C.D."/>
            <person name="Smith M."/>
            <person name="Steward C."/>
            <person name="Subramanian S."/>
            <person name="Sycamore N."/>
            <person name="Tracey A."/>
            <person name="Tromans A."/>
            <person name="Van Helmond Z."/>
            <person name="Wall M."/>
            <person name="Wallis J.M."/>
            <person name="White S."/>
            <person name="Whitehead S.L."/>
            <person name="Wilkinson J.E."/>
            <person name="Willey D.L."/>
            <person name="Williams H."/>
            <person name="Wilming L."/>
            <person name="Wray P.W."/>
            <person name="Wu Z."/>
            <person name="Coulson A."/>
            <person name="Vaudin M."/>
            <person name="Sulston J.E."/>
            <person name="Durbin R.M."/>
            <person name="Hubbard T."/>
            <person name="Wooster R."/>
            <person name="Dunham I."/>
            <person name="Carter N.P."/>
            <person name="McVean G."/>
            <person name="Ross M.T."/>
            <person name="Harrow J."/>
            <person name="Olson M.V."/>
            <person name="Beck S."/>
            <person name="Rogers J."/>
            <person name="Bentley D.R."/>
        </authorList>
    </citation>
    <scope>NUCLEOTIDE SEQUENCE [LARGE SCALE GENOMIC DNA]</scope>
</reference>
<reference key="2">
    <citation type="journal article" date="2004" name="Genome Res.">
        <title>The status, quality, and expansion of the NIH full-length cDNA project: the Mammalian Gene Collection (MGC).</title>
        <authorList>
            <consortium name="The MGC Project Team"/>
        </authorList>
    </citation>
    <scope>NUCLEOTIDE SEQUENCE [LARGE SCALE MRNA] (ISOFORM 1)</scope>
    <source>
        <tissue>Testis</tissue>
    </source>
</reference>
<accession>Q68G74</accession>
<accession>E9PGE3</accession>
<gene>
    <name type="primary">LHX8</name>
</gene>
<dbReference type="EMBL" id="AC099786">
    <property type="status" value="NOT_ANNOTATED_CDS"/>
    <property type="molecule type" value="Genomic_DNA"/>
</dbReference>
<dbReference type="EMBL" id="BC040321">
    <property type="protein sequence ID" value="AAH40321.1"/>
    <property type="molecule type" value="mRNA"/>
</dbReference>
<dbReference type="CCDS" id="CCDS30756.1">
    <molecule id="Q68G74-1"/>
</dbReference>
<dbReference type="CCDS" id="CCDS58008.1">
    <molecule id="Q68G74-2"/>
</dbReference>
<dbReference type="RefSeq" id="NP_001001933.1">
    <molecule id="Q68G74-1"/>
    <property type="nucleotide sequence ID" value="NM_001001933.1"/>
</dbReference>
<dbReference type="RefSeq" id="NP_001243043.1">
    <molecule id="Q68G74-2"/>
    <property type="nucleotide sequence ID" value="NM_001256114.2"/>
</dbReference>
<dbReference type="RefSeq" id="XP_047276996.1">
    <molecule id="Q68G74-2"/>
    <property type="nucleotide sequence ID" value="XM_047421040.1"/>
</dbReference>
<dbReference type="RefSeq" id="XP_054192644.1">
    <molecule id="Q68G74-2"/>
    <property type="nucleotide sequence ID" value="XM_054336669.1"/>
</dbReference>
<dbReference type="SMR" id="Q68G74"/>
<dbReference type="BioGRID" id="136112">
    <property type="interactions" value="51"/>
</dbReference>
<dbReference type="FunCoup" id="Q68G74">
    <property type="interactions" value="653"/>
</dbReference>
<dbReference type="IntAct" id="Q68G74">
    <property type="interactions" value="65"/>
</dbReference>
<dbReference type="MINT" id="Q68G74"/>
<dbReference type="STRING" id="9606.ENSP00000294638"/>
<dbReference type="GlyGen" id="Q68G74">
    <property type="glycosylation" value="1 site, 1 N-linked glycan (1 site)"/>
</dbReference>
<dbReference type="iPTMnet" id="Q68G74"/>
<dbReference type="PhosphoSitePlus" id="Q68G74"/>
<dbReference type="BioMuta" id="LHX8"/>
<dbReference type="DMDM" id="296434566"/>
<dbReference type="jPOST" id="Q68G74"/>
<dbReference type="MassIVE" id="Q68G74"/>
<dbReference type="PaxDb" id="9606-ENSP00000294638"/>
<dbReference type="PeptideAtlas" id="Q68G74"/>
<dbReference type="Antibodypedia" id="33466">
    <property type="antibodies" value="201 antibodies from 28 providers"/>
</dbReference>
<dbReference type="DNASU" id="431707"/>
<dbReference type="Ensembl" id="ENST00000294638.9">
    <molecule id="Q68G74-1"/>
    <property type="protein sequence ID" value="ENSP00000294638.5"/>
    <property type="gene ID" value="ENSG00000162624.16"/>
</dbReference>
<dbReference type="Ensembl" id="ENST00000356261.4">
    <molecule id="Q68G74-2"/>
    <property type="protein sequence ID" value="ENSP00000348597.3"/>
    <property type="gene ID" value="ENSG00000162624.16"/>
</dbReference>
<dbReference type="GeneID" id="431707"/>
<dbReference type="KEGG" id="hsa:431707"/>
<dbReference type="MANE-Select" id="ENST00000356261.4">
    <molecule id="Q68G74-2"/>
    <property type="protein sequence ID" value="ENSP00000348597.3"/>
    <property type="RefSeq nucleotide sequence ID" value="NM_001256114.2"/>
    <property type="RefSeq protein sequence ID" value="NP_001243043.1"/>
</dbReference>
<dbReference type="UCSC" id="uc001dgo.3">
    <molecule id="Q68G74-1"/>
    <property type="organism name" value="human"/>
</dbReference>
<dbReference type="AGR" id="HGNC:28838"/>
<dbReference type="CTD" id="431707"/>
<dbReference type="DisGeNET" id="431707"/>
<dbReference type="GeneCards" id="LHX8"/>
<dbReference type="HGNC" id="HGNC:28838">
    <property type="gene designation" value="LHX8"/>
</dbReference>
<dbReference type="HPA" id="ENSG00000162624">
    <property type="expression patterns" value="Tissue enhanced (brain, lymphoid tissue, salivary gland)"/>
</dbReference>
<dbReference type="MIM" id="604425">
    <property type="type" value="gene"/>
</dbReference>
<dbReference type="neXtProt" id="NX_Q68G74"/>
<dbReference type="OpenTargets" id="ENSG00000162624"/>
<dbReference type="PharmGKB" id="PA142671553"/>
<dbReference type="VEuPathDB" id="HostDB:ENSG00000162624"/>
<dbReference type="eggNOG" id="KOG0490">
    <property type="taxonomic scope" value="Eukaryota"/>
</dbReference>
<dbReference type="GeneTree" id="ENSGT00940000156200"/>
<dbReference type="HOGENOM" id="CLU_027802_1_0_1"/>
<dbReference type="InParanoid" id="Q68G74"/>
<dbReference type="OMA" id="DPMFVCK"/>
<dbReference type="OrthoDB" id="125004at2759"/>
<dbReference type="PAN-GO" id="Q68G74">
    <property type="GO annotations" value="6 GO annotations based on evolutionary models"/>
</dbReference>
<dbReference type="PhylomeDB" id="Q68G74"/>
<dbReference type="TreeFam" id="TF315442"/>
<dbReference type="PathwayCommons" id="Q68G74"/>
<dbReference type="SignaLink" id="Q68G74"/>
<dbReference type="SIGNOR" id="Q68G74"/>
<dbReference type="BioGRID-ORCS" id="431707">
    <property type="hits" value="10 hits in 1166 CRISPR screens"/>
</dbReference>
<dbReference type="ChiTaRS" id="LHX8">
    <property type="organism name" value="human"/>
</dbReference>
<dbReference type="GenomeRNAi" id="431707"/>
<dbReference type="Pharos" id="Q68G74">
    <property type="development level" value="Tbio"/>
</dbReference>
<dbReference type="PRO" id="PR:Q68G74"/>
<dbReference type="Proteomes" id="UP000005640">
    <property type="component" value="Chromosome 1"/>
</dbReference>
<dbReference type="RNAct" id="Q68G74">
    <property type="molecule type" value="protein"/>
</dbReference>
<dbReference type="Bgee" id="ENSG00000162624">
    <property type="expression patterns" value="Expressed in secondary oocyte and 50 other cell types or tissues"/>
</dbReference>
<dbReference type="GO" id="GO:0000785">
    <property type="term" value="C:chromatin"/>
    <property type="evidence" value="ECO:0000247"/>
    <property type="project" value="NTNU_SB"/>
</dbReference>
<dbReference type="GO" id="GO:0005634">
    <property type="term" value="C:nucleus"/>
    <property type="evidence" value="ECO:0000318"/>
    <property type="project" value="GO_Central"/>
</dbReference>
<dbReference type="GO" id="GO:0000981">
    <property type="term" value="F:DNA-binding transcription factor activity, RNA polymerase II-specific"/>
    <property type="evidence" value="ECO:0000247"/>
    <property type="project" value="NTNU_SB"/>
</dbReference>
<dbReference type="GO" id="GO:0046872">
    <property type="term" value="F:metal ion binding"/>
    <property type="evidence" value="ECO:0007669"/>
    <property type="project" value="UniProtKB-KW"/>
</dbReference>
<dbReference type="GO" id="GO:0000977">
    <property type="term" value="F:RNA polymerase II transcription regulatory region sequence-specific DNA binding"/>
    <property type="evidence" value="ECO:0000318"/>
    <property type="project" value="GO_Central"/>
</dbReference>
<dbReference type="GO" id="GO:1990837">
    <property type="term" value="F:sequence-specific double-stranded DNA binding"/>
    <property type="evidence" value="ECO:0000314"/>
    <property type="project" value="ARUK-UCL"/>
</dbReference>
<dbReference type="GO" id="GO:0021884">
    <property type="term" value="P:forebrain neuron development"/>
    <property type="evidence" value="ECO:0000318"/>
    <property type="project" value="GO_Central"/>
</dbReference>
<dbReference type="GO" id="GO:0030182">
    <property type="term" value="P:neuron differentiation"/>
    <property type="evidence" value="ECO:0000318"/>
    <property type="project" value="GO_Central"/>
</dbReference>
<dbReference type="GO" id="GO:0006357">
    <property type="term" value="P:regulation of transcription by RNA polymerase II"/>
    <property type="evidence" value="ECO:0000318"/>
    <property type="project" value="GO_Central"/>
</dbReference>
<dbReference type="CDD" id="cd00086">
    <property type="entry name" value="homeodomain"/>
    <property type="match status" value="1"/>
</dbReference>
<dbReference type="CDD" id="cd09381">
    <property type="entry name" value="LIM1_Lhx7_Lhx8"/>
    <property type="match status" value="1"/>
</dbReference>
<dbReference type="CDD" id="cd09383">
    <property type="entry name" value="LIM2_Lhx7_Lhx8"/>
    <property type="match status" value="1"/>
</dbReference>
<dbReference type="FunFam" id="1.10.10.60:FF:000050">
    <property type="entry name" value="LIM homeobox 6"/>
    <property type="match status" value="1"/>
</dbReference>
<dbReference type="FunFam" id="2.10.110.10:FF:000023">
    <property type="entry name" value="LIM homeobox 6"/>
    <property type="match status" value="1"/>
</dbReference>
<dbReference type="FunFam" id="2.10.110.10:FF:000031">
    <property type="entry name" value="LIM homeobox 6, isoform CRA_b"/>
    <property type="match status" value="1"/>
</dbReference>
<dbReference type="Gene3D" id="2.10.110.10">
    <property type="entry name" value="Cysteine Rich Protein"/>
    <property type="match status" value="2"/>
</dbReference>
<dbReference type="Gene3D" id="1.10.10.60">
    <property type="entry name" value="Homeodomain-like"/>
    <property type="match status" value="1"/>
</dbReference>
<dbReference type="InterPro" id="IPR001356">
    <property type="entry name" value="HD"/>
</dbReference>
<dbReference type="InterPro" id="IPR017970">
    <property type="entry name" value="Homeobox_CS"/>
</dbReference>
<dbReference type="InterPro" id="IPR009057">
    <property type="entry name" value="Homeodomain-like_sf"/>
</dbReference>
<dbReference type="InterPro" id="IPR050453">
    <property type="entry name" value="LIM_Homeobox_TF"/>
</dbReference>
<dbReference type="InterPro" id="IPR001781">
    <property type="entry name" value="Znf_LIM"/>
</dbReference>
<dbReference type="PANTHER" id="PTHR24208">
    <property type="entry name" value="LIM/HOMEOBOX PROTEIN LHX"/>
    <property type="match status" value="1"/>
</dbReference>
<dbReference type="PANTHER" id="PTHR24208:SF117">
    <property type="entry name" value="LIM_HOMEOBOX PROTEIN LHX8"/>
    <property type="match status" value="1"/>
</dbReference>
<dbReference type="Pfam" id="PF00046">
    <property type="entry name" value="Homeodomain"/>
    <property type="match status" value="1"/>
</dbReference>
<dbReference type="Pfam" id="PF00412">
    <property type="entry name" value="LIM"/>
    <property type="match status" value="2"/>
</dbReference>
<dbReference type="SMART" id="SM00389">
    <property type="entry name" value="HOX"/>
    <property type="match status" value="1"/>
</dbReference>
<dbReference type="SMART" id="SM00132">
    <property type="entry name" value="LIM"/>
    <property type="match status" value="2"/>
</dbReference>
<dbReference type="SUPFAM" id="SSF57716">
    <property type="entry name" value="Glucocorticoid receptor-like (DNA-binding domain)"/>
    <property type="match status" value="2"/>
</dbReference>
<dbReference type="SUPFAM" id="SSF46689">
    <property type="entry name" value="Homeodomain-like"/>
    <property type="match status" value="1"/>
</dbReference>
<dbReference type="PROSITE" id="PS00027">
    <property type="entry name" value="HOMEOBOX_1"/>
    <property type="match status" value="1"/>
</dbReference>
<dbReference type="PROSITE" id="PS50071">
    <property type="entry name" value="HOMEOBOX_2"/>
    <property type="match status" value="1"/>
</dbReference>
<dbReference type="PROSITE" id="PS00478">
    <property type="entry name" value="LIM_DOMAIN_1"/>
    <property type="match status" value="2"/>
</dbReference>
<dbReference type="PROSITE" id="PS50023">
    <property type="entry name" value="LIM_DOMAIN_2"/>
    <property type="match status" value="2"/>
</dbReference>
<organism>
    <name type="scientific">Homo sapiens</name>
    <name type="common">Human</name>
    <dbReference type="NCBI Taxonomy" id="9606"/>
    <lineage>
        <taxon>Eukaryota</taxon>
        <taxon>Metazoa</taxon>
        <taxon>Chordata</taxon>
        <taxon>Craniata</taxon>
        <taxon>Vertebrata</taxon>
        <taxon>Euteleostomi</taxon>
        <taxon>Mammalia</taxon>
        <taxon>Eutheria</taxon>
        <taxon>Euarchontoglires</taxon>
        <taxon>Primates</taxon>
        <taxon>Haplorrhini</taxon>
        <taxon>Catarrhini</taxon>
        <taxon>Hominidae</taxon>
        <taxon>Homo</taxon>
    </lineage>
</organism>
<name>LHX8_HUMAN</name>
<keyword id="KW-0025">Alternative splicing</keyword>
<keyword id="KW-0238">DNA-binding</keyword>
<keyword id="KW-0371">Homeobox</keyword>
<keyword id="KW-0440">LIM domain</keyword>
<keyword id="KW-0479">Metal-binding</keyword>
<keyword id="KW-0539">Nucleus</keyword>
<keyword id="KW-1267">Proteomics identification</keyword>
<keyword id="KW-1185">Reference proteome</keyword>
<keyword id="KW-0677">Repeat</keyword>
<keyword id="KW-0804">Transcription</keyword>
<keyword id="KW-0805">Transcription regulation</keyword>
<keyword id="KW-0862">Zinc</keyword>